<accession>Q8FQ01</accession>
<evidence type="ECO:0000255" key="1">
    <source>
        <dbReference type="HAMAP-Rule" id="MF_00144"/>
    </source>
</evidence>
<organism>
    <name type="scientific">Corynebacterium efficiens (strain DSM 44549 / YS-314 / AJ 12310 / JCM 11189 / NBRC 100395)</name>
    <dbReference type="NCBI Taxonomy" id="196164"/>
    <lineage>
        <taxon>Bacteria</taxon>
        <taxon>Bacillati</taxon>
        <taxon>Actinomycetota</taxon>
        <taxon>Actinomycetes</taxon>
        <taxon>Mycobacteriales</taxon>
        <taxon>Corynebacteriaceae</taxon>
        <taxon>Corynebacterium</taxon>
    </lineage>
</organism>
<reference key="1">
    <citation type="journal article" date="2003" name="Genome Res.">
        <title>Comparative complete genome sequence analysis of the amino acid replacements responsible for the thermostability of Corynebacterium efficiens.</title>
        <authorList>
            <person name="Nishio Y."/>
            <person name="Nakamura Y."/>
            <person name="Kawarabayasi Y."/>
            <person name="Usuda Y."/>
            <person name="Kimura E."/>
            <person name="Sugimoto S."/>
            <person name="Matsui K."/>
            <person name="Yamagishi A."/>
            <person name="Kikuchi H."/>
            <person name="Ikeo K."/>
            <person name="Gojobori T."/>
        </authorList>
    </citation>
    <scope>NUCLEOTIDE SEQUENCE [LARGE SCALE GENOMIC DNA]</scope>
    <source>
        <strain>DSM 44549 / YS-314 / AJ 12310 / JCM 11189 / NBRC 100395</strain>
    </source>
</reference>
<feature type="chain" id="PRO_0000121629" description="tRNA-specific 2-thiouridylase MnmA">
    <location>
        <begin position="1"/>
        <end position="365"/>
    </location>
</feature>
<feature type="region of interest" description="Interaction with tRNA" evidence="1">
    <location>
        <begin position="149"/>
        <end position="151"/>
    </location>
</feature>
<feature type="active site" description="Nucleophile" evidence="1">
    <location>
        <position position="101"/>
    </location>
</feature>
<feature type="active site" description="Cysteine persulfide intermediate" evidence="1">
    <location>
        <position position="199"/>
    </location>
</feature>
<feature type="binding site" evidence="1">
    <location>
        <begin position="6"/>
        <end position="13"/>
    </location>
    <ligand>
        <name>ATP</name>
        <dbReference type="ChEBI" id="CHEBI:30616"/>
    </ligand>
</feature>
<feature type="binding site" evidence="1">
    <location>
        <position position="32"/>
    </location>
    <ligand>
        <name>ATP</name>
        <dbReference type="ChEBI" id="CHEBI:30616"/>
    </ligand>
</feature>
<feature type="binding site" evidence="1">
    <location>
        <position position="125"/>
    </location>
    <ligand>
        <name>ATP</name>
        <dbReference type="ChEBI" id="CHEBI:30616"/>
    </ligand>
</feature>
<feature type="site" description="Interaction with tRNA" evidence="1">
    <location>
        <position position="126"/>
    </location>
</feature>
<feature type="site" description="Interaction with tRNA" evidence="1">
    <location>
        <position position="340"/>
    </location>
</feature>
<feature type="disulfide bond" description="Alternate" evidence="1">
    <location>
        <begin position="101"/>
        <end position="199"/>
    </location>
</feature>
<comment type="function">
    <text evidence="1">Catalyzes the 2-thiolation of uridine at the wobble position (U34) of tRNA, leading to the formation of s(2)U34.</text>
</comment>
<comment type="catalytic activity">
    <reaction evidence="1">
        <text>S-sulfanyl-L-cysteinyl-[protein] + uridine(34) in tRNA + AH2 + ATP = 2-thiouridine(34) in tRNA + L-cysteinyl-[protein] + A + AMP + diphosphate + H(+)</text>
        <dbReference type="Rhea" id="RHEA:47032"/>
        <dbReference type="Rhea" id="RHEA-COMP:10131"/>
        <dbReference type="Rhea" id="RHEA-COMP:11726"/>
        <dbReference type="Rhea" id="RHEA-COMP:11727"/>
        <dbReference type="Rhea" id="RHEA-COMP:11728"/>
        <dbReference type="ChEBI" id="CHEBI:13193"/>
        <dbReference type="ChEBI" id="CHEBI:15378"/>
        <dbReference type="ChEBI" id="CHEBI:17499"/>
        <dbReference type="ChEBI" id="CHEBI:29950"/>
        <dbReference type="ChEBI" id="CHEBI:30616"/>
        <dbReference type="ChEBI" id="CHEBI:33019"/>
        <dbReference type="ChEBI" id="CHEBI:61963"/>
        <dbReference type="ChEBI" id="CHEBI:65315"/>
        <dbReference type="ChEBI" id="CHEBI:87170"/>
        <dbReference type="ChEBI" id="CHEBI:456215"/>
        <dbReference type="EC" id="2.8.1.13"/>
    </reaction>
</comment>
<comment type="subcellular location">
    <subcellularLocation>
        <location evidence="1">Cytoplasm</location>
    </subcellularLocation>
</comment>
<comment type="similarity">
    <text evidence="1">Belongs to the MnmA/TRMU family.</text>
</comment>
<keyword id="KW-0067">ATP-binding</keyword>
<keyword id="KW-0963">Cytoplasm</keyword>
<keyword id="KW-1015">Disulfide bond</keyword>
<keyword id="KW-0547">Nucleotide-binding</keyword>
<keyword id="KW-1185">Reference proteome</keyword>
<keyword id="KW-0694">RNA-binding</keyword>
<keyword id="KW-0808">Transferase</keyword>
<keyword id="KW-0819">tRNA processing</keyword>
<keyword id="KW-0820">tRNA-binding</keyword>
<sequence length="365" mass="39135">MRVLAAMSGGVDSAVAASRAVAAGHEVVGVHLALSRDPQSVRESSRGCCSLEDSADARRVCDKLGIPFYVWDFSDRFKEDVIDDFIDSYAIGETPNPCLRCNEKIKFAALLERGIALGFDAVVTGHYARLTQPADGGDGYLRRGVDMNKDQSYVLGVLGAHEIAHCMFPVGDTVKPEIREEAAASGFSVAKKPDSYDICFIPDGNTQAFLGKHIGLRPGMIVDREGTTLREHAGVHEFTIGQRKGLDIKEPAADGRPRYVTDIDAATGTVTVGSREDLEVGVIHADRLKFLHPAMDGELDCEVQVRAHGGVVKCHARIDRTADTMRLDLAESLSGVARGQAAVLYLPDPEGDIVLGSGTICGTEA</sequence>
<proteinExistence type="inferred from homology"/>
<protein>
    <recommendedName>
        <fullName evidence="1">tRNA-specific 2-thiouridylase MnmA</fullName>
        <ecNumber evidence="1">2.8.1.13</ecNumber>
    </recommendedName>
</protein>
<gene>
    <name evidence="1" type="primary">mnmA</name>
    <name type="synonym">trmU</name>
    <name type="ordered locus">CE1334</name>
</gene>
<name>MNMA_COREF</name>
<dbReference type="EC" id="2.8.1.13" evidence="1"/>
<dbReference type="EMBL" id="BA000035">
    <property type="protein sequence ID" value="BAC18144.1"/>
    <property type="molecule type" value="Genomic_DNA"/>
</dbReference>
<dbReference type="RefSeq" id="WP_011075396.1">
    <property type="nucleotide sequence ID" value="NC_004369.1"/>
</dbReference>
<dbReference type="SMR" id="Q8FQ01"/>
<dbReference type="STRING" id="196164.gene:10741743"/>
<dbReference type="KEGG" id="cef:CE1334"/>
<dbReference type="eggNOG" id="COG0482">
    <property type="taxonomic scope" value="Bacteria"/>
</dbReference>
<dbReference type="HOGENOM" id="CLU_035188_0_2_11"/>
<dbReference type="OrthoDB" id="9800696at2"/>
<dbReference type="Proteomes" id="UP000001409">
    <property type="component" value="Chromosome"/>
</dbReference>
<dbReference type="GO" id="GO:0005737">
    <property type="term" value="C:cytoplasm"/>
    <property type="evidence" value="ECO:0007669"/>
    <property type="project" value="UniProtKB-SubCell"/>
</dbReference>
<dbReference type="GO" id="GO:0005524">
    <property type="term" value="F:ATP binding"/>
    <property type="evidence" value="ECO:0007669"/>
    <property type="project" value="UniProtKB-KW"/>
</dbReference>
<dbReference type="GO" id="GO:0000049">
    <property type="term" value="F:tRNA binding"/>
    <property type="evidence" value="ECO:0007669"/>
    <property type="project" value="UniProtKB-KW"/>
</dbReference>
<dbReference type="GO" id="GO:0103016">
    <property type="term" value="F:tRNA-uridine 2-sulfurtransferase activity"/>
    <property type="evidence" value="ECO:0007669"/>
    <property type="project" value="UniProtKB-EC"/>
</dbReference>
<dbReference type="GO" id="GO:0002143">
    <property type="term" value="P:tRNA wobble position uridine thiolation"/>
    <property type="evidence" value="ECO:0007669"/>
    <property type="project" value="TreeGrafter"/>
</dbReference>
<dbReference type="CDD" id="cd01998">
    <property type="entry name" value="MnmA_TRMU-like"/>
    <property type="match status" value="1"/>
</dbReference>
<dbReference type="FunFam" id="3.40.50.620:FF:000057">
    <property type="entry name" value="tRNA-specific 2-thiouridylase MnmA"/>
    <property type="match status" value="1"/>
</dbReference>
<dbReference type="Gene3D" id="2.30.30.280">
    <property type="entry name" value="Adenine nucleotide alpha hydrolases-like domains"/>
    <property type="match status" value="1"/>
</dbReference>
<dbReference type="Gene3D" id="3.40.50.620">
    <property type="entry name" value="HUPs"/>
    <property type="match status" value="1"/>
</dbReference>
<dbReference type="Gene3D" id="2.40.30.10">
    <property type="entry name" value="Translation factors"/>
    <property type="match status" value="1"/>
</dbReference>
<dbReference type="HAMAP" id="MF_00144">
    <property type="entry name" value="tRNA_thiouridyl_MnmA"/>
    <property type="match status" value="1"/>
</dbReference>
<dbReference type="InterPro" id="IPR004506">
    <property type="entry name" value="MnmA-like"/>
</dbReference>
<dbReference type="InterPro" id="IPR046885">
    <property type="entry name" value="MnmA-like_C"/>
</dbReference>
<dbReference type="InterPro" id="IPR046884">
    <property type="entry name" value="MnmA-like_central"/>
</dbReference>
<dbReference type="InterPro" id="IPR023382">
    <property type="entry name" value="MnmA-like_central_sf"/>
</dbReference>
<dbReference type="InterPro" id="IPR014729">
    <property type="entry name" value="Rossmann-like_a/b/a_fold"/>
</dbReference>
<dbReference type="NCBIfam" id="NF001138">
    <property type="entry name" value="PRK00143.1"/>
    <property type="match status" value="1"/>
</dbReference>
<dbReference type="NCBIfam" id="TIGR00420">
    <property type="entry name" value="trmU"/>
    <property type="match status" value="1"/>
</dbReference>
<dbReference type="PANTHER" id="PTHR11933:SF5">
    <property type="entry name" value="MITOCHONDRIAL TRNA-SPECIFIC 2-THIOURIDYLASE 1"/>
    <property type="match status" value="1"/>
</dbReference>
<dbReference type="PANTHER" id="PTHR11933">
    <property type="entry name" value="TRNA 5-METHYLAMINOMETHYL-2-THIOURIDYLATE -METHYLTRANSFERASE"/>
    <property type="match status" value="1"/>
</dbReference>
<dbReference type="Pfam" id="PF03054">
    <property type="entry name" value="tRNA_Me_trans"/>
    <property type="match status" value="1"/>
</dbReference>
<dbReference type="Pfam" id="PF20258">
    <property type="entry name" value="tRNA_Me_trans_C"/>
    <property type="match status" value="1"/>
</dbReference>
<dbReference type="Pfam" id="PF20259">
    <property type="entry name" value="tRNA_Me_trans_M"/>
    <property type="match status" value="1"/>
</dbReference>
<dbReference type="SUPFAM" id="SSF52402">
    <property type="entry name" value="Adenine nucleotide alpha hydrolases-like"/>
    <property type="match status" value="1"/>
</dbReference>